<feature type="chain" id="PRO_0000145836" description="Phosphoglycerate kinase 2">
    <location>
        <begin position="1"/>
        <end position="417"/>
    </location>
</feature>
<feature type="binding site" evidence="2">
    <location>
        <position position="23"/>
    </location>
    <ligand>
        <name>(2R)-3-phosphoglycerate</name>
        <dbReference type="ChEBI" id="CHEBI:58272"/>
    </ligand>
</feature>
<feature type="binding site" evidence="4 11">
    <location>
        <position position="24"/>
    </location>
    <ligand>
        <name>(2R)-3-phosphoglycerate</name>
        <dbReference type="ChEBI" id="CHEBI:58272"/>
    </ligand>
</feature>
<feature type="binding site" evidence="2">
    <location>
        <position position="25"/>
    </location>
    <ligand>
        <name>(2R)-3-phosphoglycerate</name>
        <dbReference type="ChEBI" id="CHEBI:58272"/>
    </ligand>
</feature>
<feature type="binding site" evidence="4 11">
    <location>
        <position position="26"/>
    </location>
    <ligand>
        <name>(2R)-3-phosphoglycerate</name>
        <dbReference type="ChEBI" id="CHEBI:58272"/>
    </ligand>
</feature>
<feature type="binding site" evidence="2">
    <location>
        <position position="38"/>
    </location>
    <ligand>
        <name>(2R)-3-phosphoglycerate</name>
        <dbReference type="ChEBI" id="CHEBI:58272"/>
    </ligand>
</feature>
<feature type="binding site" evidence="4 11">
    <location>
        <position position="39"/>
    </location>
    <ligand>
        <name>(2R)-3-phosphoglycerate</name>
        <dbReference type="ChEBI" id="CHEBI:58272"/>
    </ligand>
</feature>
<feature type="binding site" evidence="2">
    <location>
        <position position="62"/>
    </location>
    <ligand>
        <name>(2R)-3-phosphoglycerate</name>
        <dbReference type="ChEBI" id="CHEBI:58272"/>
    </ligand>
</feature>
<feature type="binding site" evidence="4 11 12">
    <location>
        <position position="63"/>
    </location>
    <ligand>
        <name>(2R)-3-phosphoglycerate</name>
        <dbReference type="ChEBI" id="CHEBI:58272"/>
    </ligand>
</feature>
<feature type="binding site" evidence="2">
    <location>
        <position position="65"/>
    </location>
    <ligand>
        <name>(2R)-3-phosphoglycerate</name>
        <dbReference type="ChEBI" id="CHEBI:58272"/>
    </ligand>
</feature>
<feature type="binding site" evidence="4 11">
    <location>
        <position position="66"/>
    </location>
    <ligand>
        <name>(2R)-3-phosphoglycerate</name>
        <dbReference type="ChEBI" id="CHEBI:58272"/>
    </ligand>
</feature>
<feature type="binding site" evidence="2">
    <location>
        <position position="122"/>
    </location>
    <ligand>
        <name>(2R)-3-phosphoglycerate</name>
        <dbReference type="ChEBI" id="CHEBI:58272"/>
    </ligand>
</feature>
<feature type="binding site" evidence="4 11 12">
    <location>
        <position position="123"/>
    </location>
    <ligand>
        <name>(2R)-3-phosphoglycerate</name>
        <dbReference type="ChEBI" id="CHEBI:58272"/>
    </ligand>
</feature>
<feature type="binding site" evidence="2">
    <location>
        <position position="170"/>
    </location>
    <ligand>
        <name>(2R)-3-phosphoglycerate</name>
        <dbReference type="ChEBI" id="CHEBI:58272"/>
    </ligand>
</feature>
<feature type="binding site" evidence="4 11">
    <location>
        <position position="171"/>
    </location>
    <ligand>
        <name>(2R)-3-phosphoglycerate</name>
        <dbReference type="ChEBI" id="CHEBI:58272"/>
    </ligand>
</feature>
<feature type="binding site" evidence="2">
    <location>
        <position position="214"/>
    </location>
    <ligand>
        <name>ADP</name>
        <dbReference type="ChEBI" id="CHEBI:456216"/>
    </ligand>
</feature>
<feature type="binding site" evidence="2">
    <location>
        <position position="214"/>
    </location>
    <ligand>
        <name>CDP</name>
        <dbReference type="ChEBI" id="CHEBI:58069"/>
    </ligand>
</feature>
<feature type="binding site" evidence="3">
    <location>
        <position position="215"/>
    </location>
    <ligand>
        <name>AMP</name>
        <dbReference type="ChEBI" id="CHEBI:456215"/>
    </ligand>
</feature>
<feature type="binding site" evidence="4 12">
    <location>
        <position position="215"/>
    </location>
    <ligand>
        <name>ATP</name>
        <dbReference type="ChEBI" id="CHEBI:30616"/>
    </ligand>
</feature>
<feature type="binding site" evidence="2">
    <location>
        <position position="215"/>
    </location>
    <ligand>
        <name>Mg(2+)</name>
        <dbReference type="ChEBI" id="CHEBI:18420"/>
    </ligand>
</feature>
<feature type="binding site" evidence="3">
    <location>
        <position position="216"/>
    </location>
    <ligand>
        <name>AMP</name>
        <dbReference type="ChEBI" id="CHEBI:456215"/>
    </ligand>
</feature>
<feature type="binding site" evidence="2">
    <location>
        <position position="219"/>
    </location>
    <ligand>
        <name>CDP</name>
        <dbReference type="ChEBI" id="CHEBI:58069"/>
    </ligand>
</feature>
<feature type="binding site" evidence="2">
    <location>
        <position position="219"/>
    </location>
    <ligand>
        <name>Mg(2+)</name>
        <dbReference type="ChEBI" id="CHEBI:18420"/>
    </ligand>
</feature>
<feature type="binding site" evidence="3">
    <location>
        <position position="220"/>
    </location>
    <ligand>
        <name>AMP</name>
        <dbReference type="ChEBI" id="CHEBI:456215"/>
    </ligand>
</feature>
<feature type="binding site" evidence="4 12">
    <location>
        <position position="220"/>
    </location>
    <ligand>
        <name>ATP</name>
        <dbReference type="ChEBI" id="CHEBI:30616"/>
    </ligand>
</feature>
<feature type="binding site" evidence="2">
    <location>
        <position position="238"/>
    </location>
    <ligand>
        <name>ADP</name>
        <dbReference type="ChEBI" id="CHEBI:456216"/>
    </ligand>
</feature>
<feature type="binding site" evidence="2">
    <location>
        <position position="238"/>
    </location>
    <ligand>
        <name>CDP</name>
        <dbReference type="ChEBI" id="CHEBI:58069"/>
    </ligand>
</feature>
<feature type="binding site" evidence="3">
    <location>
        <position position="239"/>
    </location>
    <ligand>
        <name>AMP</name>
        <dbReference type="ChEBI" id="CHEBI:456215"/>
    </ligand>
</feature>
<feature type="binding site" evidence="4 12">
    <location>
        <position position="239"/>
    </location>
    <ligand>
        <name>ATP</name>
        <dbReference type="ChEBI" id="CHEBI:30616"/>
    </ligand>
</feature>
<feature type="binding site" evidence="3">
    <location>
        <position position="313"/>
    </location>
    <ligand>
        <name>AMP</name>
        <dbReference type="ChEBI" id="CHEBI:456215"/>
    </ligand>
</feature>
<feature type="binding site" evidence="4 12">
    <location>
        <position position="313"/>
    </location>
    <ligand>
        <name>ATP</name>
        <dbReference type="ChEBI" id="CHEBI:30616"/>
    </ligand>
</feature>
<feature type="binding site" evidence="2">
    <location>
        <position position="338"/>
    </location>
    <ligand>
        <name>CDP</name>
        <dbReference type="ChEBI" id="CHEBI:58069"/>
    </ligand>
</feature>
<feature type="binding site" evidence="2">
    <location>
        <position position="340"/>
    </location>
    <ligand>
        <name>CDP</name>
        <dbReference type="ChEBI" id="CHEBI:58069"/>
    </ligand>
</feature>
<feature type="binding site" evidence="2">
    <location>
        <position position="343"/>
    </location>
    <ligand>
        <name>ADP</name>
        <dbReference type="ChEBI" id="CHEBI:456216"/>
    </ligand>
</feature>
<feature type="binding site" evidence="2">
    <location>
        <position position="343"/>
    </location>
    <ligand>
        <name>CDP</name>
        <dbReference type="ChEBI" id="CHEBI:58069"/>
    </ligand>
</feature>
<feature type="binding site" evidence="3">
    <location>
        <position position="344"/>
    </location>
    <ligand>
        <name>AMP</name>
        <dbReference type="ChEBI" id="CHEBI:456215"/>
    </ligand>
</feature>
<feature type="binding site" evidence="4 12">
    <location>
        <position position="344"/>
    </location>
    <ligand>
        <name>ATP</name>
        <dbReference type="ChEBI" id="CHEBI:30616"/>
    </ligand>
</feature>
<feature type="binding site" evidence="4 12">
    <location>
        <position position="375"/>
    </location>
    <ligand>
        <name>ATP</name>
        <dbReference type="ChEBI" id="CHEBI:30616"/>
    </ligand>
</feature>
<feature type="binding site" evidence="3">
    <location>
        <position position="375"/>
    </location>
    <ligand>
        <name>Mg(2+)</name>
        <dbReference type="ChEBI" id="CHEBI:18420"/>
    </ligand>
</feature>
<feature type="binding site" evidence="3">
    <location>
        <position position="376"/>
    </location>
    <ligand>
        <name>ATP</name>
        <dbReference type="ChEBI" id="CHEBI:30616"/>
    </ligand>
</feature>
<feature type="modified residue" description="Phosphoserine" evidence="2">
    <location>
        <position position="4"/>
    </location>
</feature>
<feature type="modified residue" description="N6-acetyllysine" evidence="2">
    <location>
        <position position="11"/>
    </location>
</feature>
<feature type="modified residue" description="N6-acetyllysine" evidence="2">
    <location>
        <position position="48"/>
    </location>
</feature>
<feature type="modified residue" description="N6-acetyllysine" evidence="2">
    <location>
        <position position="75"/>
    </location>
</feature>
<feature type="modified residue" description="N6-acetyllysine" evidence="2">
    <location>
        <position position="86"/>
    </location>
</feature>
<feature type="modified residue" description="N6-acetyllysine" evidence="2">
    <location>
        <position position="97"/>
    </location>
</feature>
<feature type="modified residue" description="N6-acetyllysine" evidence="2">
    <location>
        <position position="131"/>
    </location>
</feature>
<feature type="modified residue" description="N6-acetyllysine" evidence="2">
    <location>
        <position position="146"/>
    </location>
</feature>
<feature type="modified residue" description="Phosphotyrosine" evidence="2">
    <location>
        <position position="196"/>
    </location>
</feature>
<feature type="modified residue" description="N6-acetyllysine" evidence="2">
    <location>
        <position position="199"/>
    </location>
</feature>
<feature type="modified residue" description="N6-acetyllysine" evidence="2">
    <location>
        <position position="267"/>
    </location>
</feature>
<feature type="modified residue" description="N6-acetyllysine" evidence="2">
    <location>
        <position position="291"/>
    </location>
</feature>
<feature type="sequence conflict" description="In Ref. 1; AAA39920." evidence="8" ref="1">
    <original>Q</original>
    <variation>R</variation>
    <location>
        <position position="151"/>
    </location>
</feature>
<feature type="sequence conflict" description="In Ref. 1; AAA39920/AAA39921." evidence="8" ref="1">
    <original>T</original>
    <variation>M</variation>
    <location>
        <position position="176"/>
    </location>
</feature>
<feature type="helix" evidence="14">
    <location>
        <begin position="9"/>
        <end position="11"/>
    </location>
</feature>
<feature type="strand" evidence="14">
    <location>
        <begin position="18"/>
        <end position="22"/>
    </location>
</feature>
<feature type="strand" evidence="13">
    <location>
        <begin position="29"/>
        <end position="32"/>
    </location>
</feature>
<feature type="strand" evidence="14">
    <location>
        <begin position="33"/>
        <end position="35"/>
    </location>
</feature>
<feature type="helix" evidence="14">
    <location>
        <begin position="38"/>
        <end position="52"/>
    </location>
</feature>
<feature type="strand" evidence="14">
    <location>
        <begin position="56"/>
        <end position="61"/>
    </location>
</feature>
<feature type="helix" evidence="14">
    <location>
        <begin position="73"/>
        <end position="76"/>
    </location>
</feature>
<feature type="helix" evidence="14">
    <location>
        <begin position="79"/>
        <end position="89"/>
    </location>
</feature>
<feature type="strand" evidence="13">
    <location>
        <begin position="93"/>
        <end position="95"/>
    </location>
</feature>
<feature type="strand" evidence="14">
    <location>
        <begin position="99"/>
        <end position="101"/>
    </location>
</feature>
<feature type="helix" evidence="14">
    <location>
        <begin position="102"/>
        <end position="109"/>
    </location>
</feature>
<feature type="strand" evidence="14">
    <location>
        <begin position="115"/>
        <end position="118"/>
    </location>
</feature>
<feature type="helix" evidence="14">
    <location>
        <begin position="122"/>
        <end position="124"/>
    </location>
</feature>
<feature type="turn" evidence="14">
    <location>
        <begin position="126"/>
        <end position="130"/>
    </location>
</feature>
<feature type="strand" evidence="14">
    <location>
        <begin position="131"/>
        <end position="133"/>
    </location>
</feature>
<feature type="strand" evidence="14">
    <location>
        <begin position="139"/>
        <end position="141"/>
    </location>
</feature>
<feature type="helix" evidence="14">
    <location>
        <begin position="144"/>
        <end position="155"/>
    </location>
</feature>
<feature type="strand" evidence="14">
    <location>
        <begin position="159"/>
        <end position="163"/>
    </location>
</feature>
<feature type="helix" evidence="14">
    <location>
        <begin position="166"/>
        <end position="168"/>
    </location>
</feature>
<feature type="helix" evidence="14">
    <location>
        <begin position="174"/>
        <end position="177"/>
    </location>
</feature>
<feature type="strand" evidence="14">
    <location>
        <begin position="184"/>
        <end position="186"/>
    </location>
</feature>
<feature type="helix" evidence="14">
    <location>
        <begin position="188"/>
        <end position="202"/>
    </location>
</feature>
<feature type="strand" evidence="14">
    <location>
        <begin position="206"/>
        <end position="213"/>
    </location>
</feature>
<feature type="helix" evidence="14">
    <location>
        <begin position="218"/>
        <end position="220"/>
    </location>
</feature>
<feature type="helix" evidence="14">
    <location>
        <begin position="221"/>
        <end position="227"/>
    </location>
</feature>
<feature type="turn" evidence="14">
    <location>
        <begin position="228"/>
        <end position="230"/>
    </location>
</feature>
<feature type="strand" evidence="14">
    <location>
        <begin position="232"/>
        <end position="237"/>
    </location>
</feature>
<feature type="helix" evidence="14">
    <location>
        <begin position="240"/>
        <end position="249"/>
    </location>
</feature>
<feature type="strand" evidence="13">
    <location>
        <begin position="253"/>
        <end position="256"/>
    </location>
</feature>
<feature type="helix" evidence="14">
    <location>
        <begin position="260"/>
        <end position="263"/>
    </location>
</feature>
<feature type="helix" evidence="14">
    <location>
        <begin position="266"/>
        <end position="275"/>
    </location>
</feature>
<feature type="strand" evidence="14">
    <location>
        <begin position="279"/>
        <end position="281"/>
    </location>
</feature>
<feature type="strand" evidence="14">
    <location>
        <begin position="284"/>
        <end position="293"/>
    </location>
</feature>
<feature type="strand" evidence="14">
    <location>
        <begin position="298"/>
        <end position="302"/>
    </location>
</feature>
<feature type="turn" evidence="14">
    <location>
        <begin position="303"/>
        <end position="305"/>
    </location>
</feature>
<feature type="strand" evidence="14">
    <location>
        <begin position="312"/>
        <end position="316"/>
    </location>
</feature>
<feature type="helix" evidence="14">
    <location>
        <begin position="318"/>
        <end position="329"/>
    </location>
</feature>
<feature type="strand" evidence="14">
    <location>
        <begin position="332"/>
        <end position="338"/>
    </location>
</feature>
<feature type="helix" evidence="14">
    <location>
        <begin position="346"/>
        <end position="348"/>
    </location>
</feature>
<feature type="helix" evidence="14">
    <location>
        <begin position="350"/>
        <end position="364"/>
    </location>
</feature>
<feature type="strand" evidence="14">
    <location>
        <begin position="368"/>
        <end position="371"/>
    </location>
</feature>
<feature type="helix" evidence="14">
    <location>
        <begin position="375"/>
        <end position="382"/>
    </location>
</feature>
<feature type="turn" evidence="14">
    <location>
        <begin position="386"/>
        <end position="388"/>
    </location>
</feature>
<feature type="strand" evidence="14">
    <location>
        <begin position="389"/>
        <end position="392"/>
    </location>
</feature>
<feature type="helix" evidence="14">
    <location>
        <begin position="396"/>
        <end position="402"/>
    </location>
</feature>
<feature type="turn" evidence="14">
    <location>
        <begin position="403"/>
        <end position="405"/>
    </location>
</feature>
<feature type="helix" evidence="14">
    <location>
        <begin position="409"/>
        <end position="412"/>
    </location>
</feature>
<keyword id="KW-0002">3D-structure</keyword>
<keyword id="KW-0007">Acetylation</keyword>
<keyword id="KW-0067">ATP-binding</keyword>
<keyword id="KW-0963">Cytoplasm</keyword>
<keyword id="KW-0324">Glycolysis</keyword>
<keyword id="KW-0418">Kinase</keyword>
<keyword id="KW-0460">Magnesium</keyword>
<keyword id="KW-0479">Metal-binding</keyword>
<keyword id="KW-0547">Nucleotide-binding</keyword>
<keyword id="KW-0597">Phosphoprotein</keyword>
<keyword id="KW-1185">Reference proteome</keyword>
<keyword id="KW-0808">Transferase</keyword>
<protein>
    <recommendedName>
        <fullName>Phosphoglycerate kinase 2</fullName>
        <ecNumber evidence="6">2.7.2.3</ecNumber>
    </recommendedName>
    <alternativeName>
        <fullName>Phosphoglycerate kinase, testis specific</fullName>
    </alternativeName>
</protein>
<evidence type="ECO:0000250" key="1"/>
<evidence type="ECO:0000250" key="2">
    <source>
        <dbReference type="UniProtKB" id="P00558"/>
    </source>
</evidence>
<evidence type="ECO:0000250" key="3">
    <source>
        <dbReference type="UniProtKB" id="Q7SIB7"/>
    </source>
</evidence>
<evidence type="ECO:0000269" key="4">
    <source>
    </source>
</evidence>
<evidence type="ECO:0000269" key="5">
    <source>
    </source>
</evidence>
<evidence type="ECO:0000269" key="6">
    <source>
    </source>
</evidence>
<evidence type="ECO:0000269" key="7">
    <source>
    </source>
</evidence>
<evidence type="ECO:0000305" key="8"/>
<evidence type="ECO:0000305" key="9">
    <source>
    </source>
</evidence>
<evidence type="ECO:0007744" key="10">
    <source>
        <dbReference type="PDB" id="2P9Q"/>
    </source>
</evidence>
<evidence type="ECO:0007744" key="11">
    <source>
        <dbReference type="PDB" id="2P9T"/>
    </source>
</evidence>
<evidence type="ECO:0007744" key="12">
    <source>
        <dbReference type="PDB" id="2PAA"/>
    </source>
</evidence>
<evidence type="ECO:0007829" key="13">
    <source>
        <dbReference type="PDB" id="2P9Q"/>
    </source>
</evidence>
<evidence type="ECO:0007829" key="14">
    <source>
        <dbReference type="PDB" id="2P9T"/>
    </source>
</evidence>
<comment type="function">
    <text evidence="5">Essential for sperm motility and male fertility but is not required for the completion of spermatogenesis (PubMed:19759366).</text>
</comment>
<comment type="catalytic activity">
    <reaction evidence="9">
        <text>(2R)-3-phosphoglycerate + ATP = (2R)-3-phospho-glyceroyl phosphate + ADP</text>
        <dbReference type="Rhea" id="RHEA:14801"/>
        <dbReference type="ChEBI" id="CHEBI:30616"/>
        <dbReference type="ChEBI" id="CHEBI:57604"/>
        <dbReference type="ChEBI" id="CHEBI:58272"/>
        <dbReference type="ChEBI" id="CHEBI:456216"/>
        <dbReference type="EC" id="2.7.2.3"/>
    </reaction>
</comment>
<comment type="cofactor">
    <cofactor evidence="2">
        <name>Mg(2+)</name>
        <dbReference type="ChEBI" id="CHEBI:18420"/>
    </cofactor>
</comment>
<comment type="pathway">
    <text>Carbohydrate degradation; glycolysis; pyruvate from D-glyceraldehyde 3-phosphate: step 2/5.</text>
</comment>
<comment type="subunit">
    <text evidence="4">Monomer.</text>
</comment>
<comment type="subcellular location">
    <subcellularLocation>
        <location evidence="1">Cytoplasm</location>
    </subcellularLocation>
</comment>
<comment type="tissue specificity">
    <text evidence="5 7">Testis and sperm. Localized on the principle piece in the sperm (at protein level). Testis-specific.</text>
</comment>
<comment type="disruption phenotype">
    <text evidence="5">Mice display greatly reduced ATP levels in sperm, severely impaired sperm motility and are infertile. No alteration in testis histology, sperm counts, or sperm ultrastructure seen.</text>
</comment>
<comment type="similarity">
    <text evidence="8">Belongs to the phosphoglycerate kinase family.</text>
</comment>
<dbReference type="EC" id="2.7.2.3" evidence="6"/>
<dbReference type="EMBL" id="M17299">
    <property type="protein sequence ID" value="AAA39920.1"/>
    <property type="molecule type" value="Genomic_DNA"/>
</dbReference>
<dbReference type="EMBL" id="M18654">
    <property type="protein sequence ID" value="AAA39921.1"/>
    <property type="molecule type" value="mRNA"/>
</dbReference>
<dbReference type="EMBL" id="AK133436">
    <property type="protein sequence ID" value="BAE21656.1"/>
    <property type="molecule type" value="mRNA"/>
</dbReference>
<dbReference type="EMBL" id="CH466559">
    <property type="protein sequence ID" value="EDL23381.1"/>
    <property type="molecule type" value="Genomic_DNA"/>
</dbReference>
<dbReference type="EMBL" id="BC052343">
    <property type="protein sequence ID" value="AAH52343.1"/>
    <property type="molecule type" value="mRNA"/>
</dbReference>
<dbReference type="EMBL" id="BC061054">
    <property type="protein sequence ID" value="AAH61054.1"/>
    <property type="molecule type" value="mRNA"/>
</dbReference>
<dbReference type="EMBL" id="X55310">
    <property type="protein sequence ID" value="CAA39014.1"/>
    <property type="molecule type" value="Genomic_DNA"/>
</dbReference>
<dbReference type="CCDS" id="CCDS28782.1"/>
<dbReference type="PIR" id="A27775">
    <property type="entry name" value="A27775"/>
</dbReference>
<dbReference type="RefSeq" id="NP_112467.2">
    <property type="nucleotide sequence ID" value="NM_031190.2"/>
</dbReference>
<dbReference type="PDB" id="2P9Q">
    <property type="method" value="X-ray"/>
    <property type="resolution" value="2.70 A"/>
    <property type="chains" value="A/B=2-417"/>
</dbReference>
<dbReference type="PDB" id="2P9T">
    <property type="method" value="X-ray"/>
    <property type="resolution" value="2.00 A"/>
    <property type="chains" value="A=2-417"/>
</dbReference>
<dbReference type="PDB" id="2PAA">
    <property type="method" value="X-ray"/>
    <property type="resolution" value="2.70 A"/>
    <property type="chains" value="A/B=2-417"/>
</dbReference>
<dbReference type="PDBsum" id="2P9Q"/>
<dbReference type="PDBsum" id="2P9T"/>
<dbReference type="PDBsum" id="2PAA"/>
<dbReference type="SMR" id="P09041"/>
<dbReference type="BioGRID" id="202135">
    <property type="interactions" value="14"/>
</dbReference>
<dbReference type="FunCoup" id="P09041">
    <property type="interactions" value="362"/>
</dbReference>
<dbReference type="IntAct" id="P09041">
    <property type="interactions" value="1"/>
</dbReference>
<dbReference type="STRING" id="10090.ENSMUSP00000033585"/>
<dbReference type="GlyGen" id="P09041">
    <property type="glycosylation" value="1 site, 1 O-linked glycan (1 site)"/>
</dbReference>
<dbReference type="iPTMnet" id="P09041"/>
<dbReference type="PhosphoSitePlus" id="P09041"/>
<dbReference type="SwissPalm" id="P09041"/>
<dbReference type="REPRODUCTION-2DPAGE" id="IPI00555060"/>
<dbReference type="REPRODUCTION-2DPAGE" id="P09041"/>
<dbReference type="jPOST" id="P09041"/>
<dbReference type="PaxDb" id="10090-ENSMUSP00000033585"/>
<dbReference type="PeptideAtlas" id="P09041"/>
<dbReference type="ProteomicsDB" id="288106"/>
<dbReference type="Pumba" id="P09041"/>
<dbReference type="Antibodypedia" id="30847">
    <property type="antibodies" value="244 antibodies from 29 providers"/>
</dbReference>
<dbReference type="DNASU" id="18663"/>
<dbReference type="Ensembl" id="ENSMUST00000033585.7">
    <property type="protein sequence ID" value="ENSMUSP00000033585.5"/>
    <property type="gene ID" value="ENSMUSG00000031233.7"/>
</dbReference>
<dbReference type="GeneID" id="18663"/>
<dbReference type="KEGG" id="mmu:18663"/>
<dbReference type="UCSC" id="uc008cof.2">
    <property type="organism name" value="mouse"/>
</dbReference>
<dbReference type="AGR" id="MGI:97563"/>
<dbReference type="CTD" id="5232"/>
<dbReference type="MGI" id="MGI:97563">
    <property type="gene designation" value="Pgk2"/>
</dbReference>
<dbReference type="VEuPathDB" id="HostDB:ENSMUSG00000031233"/>
<dbReference type="eggNOG" id="KOG1367">
    <property type="taxonomic scope" value="Eukaryota"/>
</dbReference>
<dbReference type="GeneTree" id="ENSGT00390000008820"/>
<dbReference type="HOGENOM" id="CLU_025427_0_0_1"/>
<dbReference type="InParanoid" id="P09041"/>
<dbReference type="OMA" id="GPETNKK"/>
<dbReference type="OrthoDB" id="275353at2759"/>
<dbReference type="PhylomeDB" id="P09041"/>
<dbReference type="TreeFam" id="TF300489"/>
<dbReference type="BRENDA" id="2.7.2.3">
    <property type="organism ID" value="3474"/>
</dbReference>
<dbReference type="Reactome" id="R-MMU-70171">
    <property type="pathway name" value="Glycolysis"/>
</dbReference>
<dbReference type="Reactome" id="R-MMU-70263">
    <property type="pathway name" value="Gluconeogenesis"/>
</dbReference>
<dbReference type="SABIO-RK" id="P09041"/>
<dbReference type="UniPathway" id="UPA00109">
    <property type="reaction ID" value="UER00185"/>
</dbReference>
<dbReference type="BioGRID-ORCS" id="18663">
    <property type="hits" value="2 hits in 76 CRISPR screens"/>
</dbReference>
<dbReference type="EvolutionaryTrace" id="P09041"/>
<dbReference type="PRO" id="PR:P09041"/>
<dbReference type="Proteomes" id="UP000000589">
    <property type="component" value="Chromosome 17"/>
</dbReference>
<dbReference type="RNAct" id="P09041">
    <property type="molecule type" value="protein"/>
</dbReference>
<dbReference type="Bgee" id="ENSMUSG00000031233">
    <property type="expression patterns" value="Expressed in spermatid and 10 other cell types or tissues"/>
</dbReference>
<dbReference type="GO" id="GO:0005929">
    <property type="term" value="C:cilium"/>
    <property type="evidence" value="ECO:0000314"/>
    <property type="project" value="MGI"/>
</dbReference>
<dbReference type="GO" id="GO:0005737">
    <property type="term" value="C:cytoplasm"/>
    <property type="evidence" value="ECO:0007669"/>
    <property type="project" value="UniProtKB-SubCell"/>
</dbReference>
<dbReference type="GO" id="GO:0035686">
    <property type="term" value="C:sperm fibrous sheath"/>
    <property type="evidence" value="ECO:0000314"/>
    <property type="project" value="MGI"/>
</dbReference>
<dbReference type="GO" id="GO:0005524">
    <property type="term" value="F:ATP binding"/>
    <property type="evidence" value="ECO:0000250"/>
    <property type="project" value="UniProtKB"/>
</dbReference>
<dbReference type="GO" id="GO:0046872">
    <property type="term" value="F:metal ion binding"/>
    <property type="evidence" value="ECO:0007669"/>
    <property type="project" value="UniProtKB-KW"/>
</dbReference>
<dbReference type="GO" id="GO:0004618">
    <property type="term" value="F:phosphoglycerate kinase activity"/>
    <property type="evidence" value="ECO:0000314"/>
    <property type="project" value="MGI"/>
</dbReference>
<dbReference type="GO" id="GO:0030317">
    <property type="term" value="P:flagellated sperm motility"/>
    <property type="evidence" value="ECO:0000315"/>
    <property type="project" value="MGI"/>
</dbReference>
<dbReference type="GO" id="GO:0006096">
    <property type="term" value="P:glycolytic process"/>
    <property type="evidence" value="ECO:0000315"/>
    <property type="project" value="MGI"/>
</dbReference>
<dbReference type="CDD" id="cd00318">
    <property type="entry name" value="Phosphoglycerate_kinase"/>
    <property type="match status" value="1"/>
</dbReference>
<dbReference type="DisProt" id="DP02749"/>
<dbReference type="FunFam" id="3.40.50.1260:FF:000019">
    <property type="entry name" value="Phosphoglycerate kinase 1"/>
    <property type="match status" value="1"/>
</dbReference>
<dbReference type="FunFam" id="3.40.50.1260:FF:000031">
    <property type="entry name" value="Phosphoglycerate kinase 1"/>
    <property type="match status" value="1"/>
</dbReference>
<dbReference type="Gene3D" id="3.40.50.1260">
    <property type="entry name" value="Phosphoglycerate kinase, N-terminal domain"/>
    <property type="match status" value="3"/>
</dbReference>
<dbReference type="HAMAP" id="MF_00145">
    <property type="entry name" value="Phosphoglyc_kinase"/>
    <property type="match status" value="1"/>
</dbReference>
<dbReference type="InterPro" id="IPR001576">
    <property type="entry name" value="Phosphoglycerate_kinase"/>
</dbReference>
<dbReference type="InterPro" id="IPR015911">
    <property type="entry name" value="Phosphoglycerate_kinase_CS"/>
</dbReference>
<dbReference type="InterPro" id="IPR015824">
    <property type="entry name" value="Phosphoglycerate_kinase_N"/>
</dbReference>
<dbReference type="InterPro" id="IPR036043">
    <property type="entry name" value="Phosphoglycerate_kinase_sf"/>
</dbReference>
<dbReference type="PANTHER" id="PTHR11406">
    <property type="entry name" value="PHOSPHOGLYCERATE KINASE"/>
    <property type="match status" value="1"/>
</dbReference>
<dbReference type="PANTHER" id="PTHR11406:SF10">
    <property type="entry name" value="PHOSPHOGLYCERATE KINASE 2"/>
    <property type="match status" value="1"/>
</dbReference>
<dbReference type="Pfam" id="PF00162">
    <property type="entry name" value="PGK"/>
    <property type="match status" value="1"/>
</dbReference>
<dbReference type="PIRSF" id="PIRSF000724">
    <property type="entry name" value="Pgk"/>
    <property type="match status" value="1"/>
</dbReference>
<dbReference type="PRINTS" id="PR00477">
    <property type="entry name" value="PHGLYCKINASE"/>
</dbReference>
<dbReference type="SUPFAM" id="SSF53748">
    <property type="entry name" value="Phosphoglycerate kinase"/>
    <property type="match status" value="1"/>
</dbReference>
<dbReference type="PROSITE" id="PS00111">
    <property type="entry name" value="PGLYCERATE_KINASE"/>
    <property type="match status" value="1"/>
</dbReference>
<proteinExistence type="evidence at protein level"/>
<gene>
    <name type="primary">Pgk2</name>
    <name type="synonym">Pgk-2</name>
</gene>
<reference key="1">
    <citation type="journal article" date="1987" name="Mol. Cell. Biol.">
        <title>The testis-specific phosphoglycerate kinase gene pgk-2 is a recruited retroposon.</title>
        <authorList>
            <person name="Boer P.H."/>
            <person name="Adra C.N."/>
            <person name="Lau Y.-F.C."/>
            <person name="McBurney M.W."/>
        </authorList>
    </citation>
    <scope>NUCLEOTIDE SEQUENCE [GENOMIC DNA / MRNA]</scope>
    <scope>CATALYTIC ACTIVITY</scope>
    <scope>TISSUE SPECIFICITY</scope>
</reference>
<reference key="2">
    <citation type="journal article" date="2005" name="Science">
        <title>The transcriptional landscape of the mammalian genome.</title>
        <authorList>
            <person name="Carninci P."/>
            <person name="Kasukawa T."/>
            <person name="Katayama S."/>
            <person name="Gough J."/>
            <person name="Frith M.C."/>
            <person name="Maeda N."/>
            <person name="Oyama R."/>
            <person name="Ravasi T."/>
            <person name="Lenhard B."/>
            <person name="Wells C."/>
            <person name="Kodzius R."/>
            <person name="Shimokawa K."/>
            <person name="Bajic V.B."/>
            <person name="Brenner S.E."/>
            <person name="Batalov S."/>
            <person name="Forrest A.R."/>
            <person name="Zavolan M."/>
            <person name="Davis M.J."/>
            <person name="Wilming L.G."/>
            <person name="Aidinis V."/>
            <person name="Allen J.E."/>
            <person name="Ambesi-Impiombato A."/>
            <person name="Apweiler R."/>
            <person name="Aturaliya R.N."/>
            <person name="Bailey T.L."/>
            <person name="Bansal M."/>
            <person name="Baxter L."/>
            <person name="Beisel K.W."/>
            <person name="Bersano T."/>
            <person name="Bono H."/>
            <person name="Chalk A.M."/>
            <person name="Chiu K.P."/>
            <person name="Choudhary V."/>
            <person name="Christoffels A."/>
            <person name="Clutterbuck D.R."/>
            <person name="Crowe M.L."/>
            <person name="Dalla E."/>
            <person name="Dalrymple B.P."/>
            <person name="de Bono B."/>
            <person name="Della Gatta G."/>
            <person name="di Bernardo D."/>
            <person name="Down T."/>
            <person name="Engstrom P."/>
            <person name="Fagiolini M."/>
            <person name="Faulkner G."/>
            <person name="Fletcher C.F."/>
            <person name="Fukushima T."/>
            <person name="Furuno M."/>
            <person name="Futaki S."/>
            <person name="Gariboldi M."/>
            <person name="Georgii-Hemming P."/>
            <person name="Gingeras T.R."/>
            <person name="Gojobori T."/>
            <person name="Green R.E."/>
            <person name="Gustincich S."/>
            <person name="Harbers M."/>
            <person name="Hayashi Y."/>
            <person name="Hensch T.K."/>
            <person name="Hirokawa N."/>
            <person name="Hill D."/>
            <person name="Huminiecki L."/>
            <person name="Iacono M."/>
            <person name="Ikeo K."/>
            <person name="Iwama A."/>
            <person name="Ishikawa T."/>
            <person name="Jakt M."/>
            <person name="Kanapin A."/>
            <person name="Katoh M."/>
            <person name="Kawasawa Y."/>
            <person name="Kelso J."/>
            <person name="Kitamura H."/>
            <person name="Kitano H."/>
            <person name="Kollias G."/>
            <person name="Krishnan S.P."/>
            <person name="Kruger A."/>
            <person name="Kummerfeld S.K."/>
            <person name="Kurochkin I.V."/>
            <person name="Lareau L.F."/>
            <person name="Lazarevic D."/>
            <person name="Lipovich L."/>
            <person name="Liu J."/>
            <person name="Liuni S."/>
            <person name="McWilliam S."/>
            <person name="Madan Babu M."/>
            <person name="Madera M."/>
            <person name="Marchionni L."/>
            <person name="Matsuda H."/>
            <person name="Matsuzawa S."/>
            <person name="Miki H."/>
            <person name="Mignone F."/>
            <person name="Miyake S."/>
            <person name="Morris K."/>
            <person name="Mottagui-Tabar S."/>
            <person name="Mulder N."/>
            <person name="Nakano N."/>
            <person name="Nakauchi H."/>
            <person name="Ng P."/>
            <person name="Nilsson R."/>
            <person name="Nishiguchi S."/>
            <person name="Nishikawa S."/>
            <person name="Nori F."/>
            <person name="Ohara O."/>
            <person name="Okazaki Y."/>
            <person name="Orlando V."/>
            <person name="Pang K.C."/>
            <person name="Pavan W.J."/>
            <person name="Pavesi G."/>
            <person name="Pesole G."/>
            <person name="Petrovsky N."/>
            <person name="Piazza S."/>
            <person name="Reed J."/>
            <person name="Reid J.F."/>
            <person name="Ring B.Z."/>
            <person name="Ringwald M."/>
            <person name="Rost B."/>
            <person name="Ruan Y."/>
            <person name="Salzberg S.L."/>
            <person name="Sandelin A."/>
            <person name="Schneider C."/>
            <person name="Schoenbach C."/>
            <person name="Sekiguchi K."/>
            <person name="Semple C.A."/>
            <person name="Seno S."/>
            <person name="Sessa L."/>
            <person name="Sheng Y."/>
            <person name="Shibata Y."/>
            <person name="Shimada H."/>
            <person name="Shimada K."/>
            <person name="Silva D."/>
            <person name="Sinclair B."/>
            <person name="Sperling S."/>
            <person name="Stupka E."/>
            <person name="Sugiura K."/>
            <person name="Sultana R."/>
            <person name="Takenaka Y."/>
            <person name="Taki K."/>
            <person name="Tammoja K."/>
            <person name="Tan S.L."/>
            <person name="Tang S."/>
            <person name="Taylor M.S."/>
            <person name="Tegner J."/>
            <person name="Teichmann S.A."/>
            <person name="Ueda H.R."/>
            <person name="van Nimwegen E."/>
            <person name="Verardo R."/>
            <person name="Wei C.L."/>
            <person name="Yagi K."/>
            <person name="Yamanishi H."/>
            <person name="Zabarovsky E."/>
            <person name="Zhu S."/>
            <person name="Zimmer A."/>
            <person name="Hide W."/>
            <person name="Bult C."/>
            <person name="Grimmond S.M."/>
            <person name="Teasdale R.D."/>
            <person name="Liu E.T."/>
            <person name="Brusic V."/>
            <person name="Quackenbush J."/>
            <person name="Wahlestedt C."/>
            <person name="Mattick J.S."/>
            <person name="Hume D.A."/>
            <person name="Kai C."/>
            <person name="Sasaki D."/>
            <person name="Tomaru Y."/>
            <person name="Fukuda S."/>
            <person name="Kanamori-Katayama M."/>
            <person name="Suzuki M."/>
            <person name="Aoki J."/>
            <person name="Arakawa T."/>
            <person name="Iida J."/>
            <person name="Imamura K."/>
            <person name="Itoh M."/>
            <person name="Kato T."/>
            <person name="Kawaji H."/>
            <person name="Kawagashira N."/>
            <person name="Kawashima T."/>
            <person name="Kojima M."/>
            <person name="Kondo S."/>
            <person name="Konno H."/>
            <person name="Nakano K."/>
            <person name="Ninomiya N."/>
            <person name="Nishio T."/>
            <person name="Okada M."/>
            <person name="Plessy C."/>
            <person name="Shibata K."/>
            <person name="Shiraki T."/>
            <person name="Suzuki S."/>
            <person name="Tagami M."/>
            <person name="Waki K."/>
            <person name="Watahiki A."/>
            <person name="Okamura-Oho Y."/>
            <person name="Suzuki H."/>
            <person name="Kawai J."/>
            <person name="Hayashizaki Y."/>
        </authorList>
    </citation>
    <scope>NUCLEOTIDE SEQUENCE [LARGE SCALE MRNA]</scope>
    <source>
        <strain>C57BL/6J</strain>
        <tissue>Testis</tissue>
    </source>
</reference>
<reference key="3">
    <citation type="submission" date="2005-07" db="EMBL/GenBank/DDBJ databases">
        <authorList>
            <person name="Mural R.J."/>
            <person name="Adams M.D."/>
            <person name="Myers E.W."/>
            <person name="Smith H.O."/>
            <person name="Venter J.C."/>
        </authorList>
    </citation>
    <scope>NUCLEOTIDE SEQUENCE [LARGE SCALE GENOMIC DNA]</scope>
</reference>
<reference key="4">
    <citation type="journal article" date="2004" name="Genome Res.">
        <title>The status, quality, and expansion of the NIH full-length cDNA project: the Mammalian Gene Collection (MGC).</title>
        <authorList>
            <consortium name="The MGC Project Team"/>
        </authorList>
    </citation>
    <scope>NUCLEOTIDE SEQUENCE [LARGE SCALE MRNA]</scope>
    <source>
        <tissue>Testis</tissue>
    </source>
</reference>
<reference key="5">
    <citation type="journal article" date="1990" name="Biochim. Biophys. Acta">
        <title>Selective activation of testis-specific genes in cultured rat spermatogenic cells.</title>
        <authorList>
            <person name="Tamaru M."/>
            <person name="Nagao Y."/>
            <person name="Taira M."/>
            <person name="Tatibana M."/>
            <person name="Masamune Y."/>
            <person name="Nakanishi Y."/>
        </authorList>
    </citation>
    <scope>NUCLEOTIDE SEQUENCE [GENOMIC DNA] OF 1-6</scope>
</reference>
<reference key="6">
    <citation type="journal article" date="1987" name="Nature">
        <title>Human testis-specific PGK gene lacks introns and possesses characteristics of a processed gene.</title>
        <authorList>
            <person name="McCarrey J.R."/>
            <person name="Thomas K."/>
        </authorList>
    </citation>
    <scope>TISSUE SPECIFICITY</scope>
</reference>
<reference key="7">
    <citation type="journal article" date="2010" name="Biol. Reprod.">
        <title>Phosphoglycerate kinase 2 (PGK2) is essential for sperm function and male fertility in mice.</title>
        <authorList>
            <person name="Danshina P.V."/>
            <person name="Geyer C.B."/>
            <person name="Dai Q."/>
            <person name="Goulding E.H."/>
            <person name="Willis W.D."/>
            <person name="Kitto G.B."/>
            <person name="McCarrey J.R."/>
            <person name="Eddy E.M."/>
            <person name="O'Brien D.A."/>
        </authorList>
    </citation>
    <scope>FUNCTION</scope>
    <scope>DISRUPTION PHENOTYPE</scope>
    <scope>TISSUE SPECIFICITY</scope>
</reference>
<reference key="8">
    <citation type="journal article" date="2010" name="Cell">
        <title>A tissue-specific atlas of mouse protein phosphorylation and expression.</title>
        <authorList>
            <person name="Huttlin E.L."/>
            <person name="Jedrychowski M.P."/>
            <person name="Elias J.E."/>
            <person name="Goswami T."/>
            <person name="Rad R."/>
            <person name="Beausoleil S.A."/>
            <person name="Villen J."/>
            <person name="Haas W."/>
            <person name="Sowa M.E."/>
            <person name="Gygi S.P."/>
        </authorList>
    </citation>
    <scope>IDENTIFICATION BY MASS SPECTROMETRY [LARGE SCALE ANALYSIS]</scope>
    <source>
        <tissue>Testis</tissue>
    </source>
</reference>
<reference evidence="10 11 12" key="9">
    <citation type="journal article" date="2008" name="Proteins">
        <title>X-ray analysis of phosphoglycerate kinase 2, a sperm-specific isoform from Mus musculus.</title>
        <authorList>
            <person name="Sawyer G.M."/>
            <person name="Monzingo A.F."/>
            <person name="Poteet E.C."/>
            <person name="O'Brien D.A."/>
            <person name="Robertus J.D."/>
        </authorList>
    </citation>
    <scope>X-RAY CRYSTALLOGRAPHY (2.0 ANGSTROMS) OF 2-417 ALONE AND IN COMPLEX WITH PHOSPHOGLYCERATE AND ATP</scope>
    <scope>SUBUNIT</scope>
    <scope>SUBSTRATE-BINDING SITES</scope>
</reference>
<organism>
    <name type="scientific">Mus musculus</name>
    <name type="common">Mouse</name>
    <dbReference type="NCBI Taxonomy" id="10090"/>
    <lineage>
        <taxon>Eukaryota</taxon>
        <taxon>Metazoa</taxon>
        <taxon>Chordata</taxon>
        <taxon>Craniata</taxon>
        <taxon>Vertebrata</taxon>
        <taxon>Euteleostomi</taxon>
        <taxon>Mammalia</taxon>
        <taxon>Eutheria</taxon>
        <taxon>Euarchontoglires</taxon>
        <taxon>Glires</taxon>
        <taxon>Rodentia</taxon>
        <taxon>Myomorpha</taxon>
        <taxon>Muroidea</taxon>
        <taxon>Muridae</taxon>
        <taxon>Murinae</taxon>
        <taxon>Mus</taxon>
        <taxon>Mus</taxon>
    </lineage>
</organism>
<accession>P09041</accession>
<accession>Q5RKV3</accession>
<accession>Q6P8V2</accession>
<sequence>MALSAKLTLDKVDLKGKRVIMRVDFNVPMKNNQITNNQRIKAAIPSIKHCLDNGAKSVVLMSHLGRPDGIPMPDKYSLEPVADELKSLLNKDVIFLKDCVGPEVEQACANPDNGSIILLENLRFHVEEEGKGKDSSGKKISADPAKVEAFQASLSKLGDVYVNDAFGTAHRAHSSTVGVNLPQKASGFLMKKELDYFSKALEKPERPFLAILGGAKVKDKIQLIKNMLDKVNFMIIGGGMAYTFLKELKNMQIGASLFDEEGATIVKEIMEKAEKNGVKIVFPVDFVTGDKFDENAKVGQATIESGIPSGWMGLDCGPESIKINAQIVAQAKLIVWNGPIGVFEWDAFAKGTKALMDEVVKATSNGCVTIIGGGDTATCCAKWGTEDKVSHVSTGGGASLELLEGKILPGVEALSNM</sequence>
<name>PGK2_MOUSE</name>